<sequence>MAGSHPYFNQPDSTHPSPPSAPPSLHWYQRCQPSDATSGLLVALLGGGLPAGFVGPLSRMAYQASNLPSLELLIWRCLFHLPIALLLKLRGDPLLGPPDIRSRAFFCALLNILSIGCAYSAVQVVPAGNAATVRKGSSTVCSAVLTLCLESQGLSGYDWCGLLGCILGLIIIVGPGLWTLQEGTTGVYTALGYAEAFLGGRALSLGLLVYRSLHFPSCLPTVAFLSGLVGLLGSVPGLFVLQTPVLPSDLLSWSCVGAVGILALVSFTCVGYAVTKAHPALVCAVLHSEVVVALILQYYMLHETVAPSDIMGAGVALGSIAIITARNLSCERTGKVEE</sequence>
<proteinExistence type="inferred from homology"/>
<feature type="chain" id="PRO_0000269554" description="Solute carrier family 35 member G3">
    <location>
        <begin position="1"/>
        <end position="338"/>
    </location>
</feature>
<feature type="transmembrane region" description="Helical" evidence="1">
    <location>
        <begin position="37"/>
        <end position="57"/>
    </location>
</feature>
<feature type="transmembrane region" description="Helical" evidence="1">
    <location>
        <begin position="67"/>
        <end position="87"/>
    </location>
</feature>
<feature type="transmembrane region" description="Helical" evidence="1">
    <location>
        <begin position="105"/>
        <end position="125"/>
    </location>
</feature>
<feature type="transmembrane region" description="Helical" evidence="1">
    <location>
        <begin position="160"/>
        <end position="180"/>
    </location>
</feature>
<feature type="transmembrane region" description="Helical" evidence="1">
    <location>
        <begin position="190"/>
        <end position="210"/>
    </location>
</feature>
<feature type="transmembrane region" description="Helical" evidence="1">
    <location>
        <begin position="221"/>
        <end position="241"/>
    </location>
</feature>
<feature type="transmembrane region" description="Helical" evidence="1">
    <location>
        <begin position="250"/>
        <end position="270"/>
    </location>
</feature>
<feature type="transmembrane region" description="Helical" evidence="1">
    <location>
        <begin position="281"/>
        <end position="301"/>
    </location>
</feature>
<feature type="transmembrane region" description="Helical" evidence="1">
    <location>
        <begin position="305"/>
        <end position="325"/>
    </location>
</feature>
<feature type="domain" description="EamA 1">
    <location>
        <begin position="49"/>
        <end position="174"/>
    </location>
</feature>
<feature type="domain" description="EamA 2">
    <location>
        <begin position="272"/>
        <end position="325"/>
    </location>
</feature>
<feature type="region of interest" description="Disordered" evidence="2">
    <location>
        <begin position="1"/>
        <end position="24"/>
    </location>
</feature>
<dbReference type="EMBL" id="DQ482900">
    <property type="protein sequence ID" value="ABE68914.1"/>
    <property type="molecule type" value="Genomic_DNA"/>
</dbReference>
<dbReference type="SMR" id="Q0Q7V0"/>
<dbReference type="Proteomes" id="UP000240080">
    <property type="component" value="Unplaced"/>
</dbReference>
<dbReference type="GO" id="GO:0016020">
    <property type="term" value="C:membrane"/>
    <property type="evidence" value="ECO:0007669"/>
    <property type="project" value="UniProtKB-SubCell"/>
</dbReference>
<dbReference type="InterPro" id="IPR000620">
    <property type="entry name" value="EamA_dom"/>
</dbReference>
<dbReference type="PANTHER" id="PTHR22911">
    <property type="entry name" value="ACYL-MALONYL CONDENSING ENZYME-RELATED"/>
    <property type="match status" value="1"/>
</dbReference>
<dbReference type="PANTHER" id="PTHR22911:SF110">
    <property type="entry name" value="SOLUTE CARRIER FAMILY 35 MEMBER G3-RELATED"/>
    <property type="match status" value="1"/>
</dbReference>
<dbReference type="Pfam" id="PF00892">
    <property type="entry name" value="EamA"/>
    <property type="match status" value="2"/>
</dbReference>
<dbReference type="SUPFAM" id="SSF103481">
    <property type="entry name" value="Multidrug resistance efflux transporter EmrE"/>
    <property type="match status" value="2"/>
</dbReference>
<name>S35G3_PANPA</name>
<protein>
    <recommendedName>
        <fullName>Solute carrier family 35 member G3</fullName>
    </recommendedName>
    <alternativeName>
        <fullName>Acyl-malonyl-condensing enzyme 1</fullName>
    </alternativeName>
    <alternativeName>
        <fullName>Transmembrane protein 21A</fullName>
    </alternativeName>
</protein>
<keyword id="KW-0472">Membrane</keyword>
<keyword id="KW-1185">Reference proteome</keyword>
<keyword id="KW-0677">Repeat</keyword>
<keyword id="KW-0812">Transmembrane</keyword>
<keyword id="KW-1133">Transmembrane helix</keyword>
<accession>Q0Q7V0</accession>
<gene>
    <name type="primary">SLC35G3</name>
    <name type="synonym">AMAC1</name>
    <name type="synonym">TMEM21A</name>
</gene>
<comment type="subcellular location">
    <subcellularLocation>
        <location evidence="3">Membrane</location>
        <topology evidence="3">Multi-pass membrane protein</topology>
    </subcellularLocation>
</comment>
<comment type="miscellaneous">
    <text>The gene encoding this protein appears to have arisen by SVA-mediated retrotransposition of the SLC35G6 gene in the primate lineage.</text>
</comment>
<comment type="similarity">
    <text evidence="3">Belongs to the SLC35G solute transporter family.</text>
</comment>
<reference key="1">
    <citation type="journal article" date="2006" name="Proc. Natl. Acad. Sci. U.S.A.">
        <title>Emergence of primate genes by retrotransposon-mediated sequence transduction.</title>
        <authorList>
            <person name="Xing J."/>
            <person name="Wang H."/>
            <person name="Belancio V.P."/>
            <person name="Cordaux R."/>
            <person name="Deininger P.L."/>
            <person name="Batzer M.A."/>
        </authorList>
    </citation>
    <scope>NUCLEOTIDE SEQUENCE [GENOMIC DNA]</scope>
</reference>
<evidence type="ECO:0000255" key="1"/>
<evidence type="ECO:0000256" key="2">
    <source>
        <dbReference type="SAM" id="MobiDB-lite"/>
    </source>
</evidence>
<evidence type="ECO:0000305" key="3"/>
<organism>
    <name type="scientific">Pan paniscus</name>
    <name type="common">Pygmy chimpanzee</name>
    <name type="synonym">Bonobo</name>
    <dbReference type="NCBI Taxonomy" id="9597"/>
    <lineage>
        <taxon>Eukaryota</taxon>
        <taxon>Metazoa</taxon>
        <taxon>Chordata</taxon>
        <taxon>Craniata</taxon>
        <taxon>Vertebrata</taxon>
        <taxon>Euteleostomi</taxon>
        <taxon>Mammalia</taxon>
        <taxon>Eutheria</taxon>
        <taxon>Euarchontoglires</taxon>
        <taxon>Primates</taxon>
        <taxon>Haplorrhini</taxon>
        <taxon>Catarrhini</taxon>
        <taxon>Hominidae</taxon>
        <taxon>Pan</taxon>
    </lineage>
</organism>